<organism>
    <name type="scientific">Caenorhabditis elegans</name>
    <dbReference type="NCBI Taxonomy" id="6239"/>
    <lineage>
        <taxon>Eukaryota</taxon>
        <taxon>Metazoa</taxon>
        <taxon>Ecdysozoa</taxon>
        <taxon>Nematoda</taxon>
        <taxon>Chromadorea</taxon>
        <taxon>Rhabditida</taxon>
        <taxon>Rhabditina</taxon>
        <taxon>Rhabditomorpha</taxon>
        <taxon>Rhabditoidea</taxon>
        <taxon>Rhabditidae</taxon>
        <taxon>Peloderinae</taxon>
        <taxon>Caenorhabditis</taxon>
    </lineage>
</organism>
<sequence>MDHRAQAREVFVRAQLEAVQKAITKNEVPLKPKHARTIIVGTHKEKSSGIFWHTVGRIQLEKHPVLTWKFCHLVHKLLRDGHRKVPEETYRYVNRFTQLSQFWKHLNTSGYGPCIESYCKLLHDRVTFHNKYPVVPGKLDLNDSQLKTLEGDLDNMFEMTIDMLDQMDALLVLQDRVYEMMNSLRWNSLIPQGQCMLSPLIIAILDTSKFYDYLVKMIFKLHSQVPPDALEGHRSRFRTIFERTKKFYEESSNLQYFKYLVSIPTLPSHAPNFLQQSDLESYRTPHAYLHSEGSEDGTSLNGHDGELLNLAEAEPQQASPSSQPDPREEQIVMLSRAVEDEKFAKERLIQEARSRIEQYENRLLQMQGEFDHAKREADENREEAQRLKNELALRDASRTQTDDARVKEAELKATAAEERFNKMKGVYEKFRSEHVLALTKLGDIQKQLEASEKSKFDKDEEITALNRKVEEAQREAGRALTKAEGDAGAVDEMRTQLVKADIEVEELKRTIDHLRESHANQLVQSSAEETNKIRLAELEVAKESGVGITQMFDHCEDALQNATSITYPPHLAQSAMNNLVNILSNERLDEPLATKDNVFAGHLLSTTLSAAASAAYTASIESYEGVNDQCKKVLAAAKVAFSDDSALSRADKMKLLRQDIQTLNSLMISLPLQTDIDKDVVGNELEQEMRRMDDAIRRAVQEIEAIQRRARESSDGIRLEVNESILANCQALMSVIMQLVIASRELQTEIVAAGKAGGSPAEFYKRNHQWTEGLLSAAKAVGVAARVLVESADGVVTGKGKFEHLIVAAQEIAASTAQLFVSSRVKADKDSSKLDALSVAAKAVNQNTAQVVAAVKNGQTTLNDEGSLDFSYLSLHAAKKEEMESQVKMLELEQSLNQERAKLAALRKQHYHMAQLVANKEGEEAQE</sequence>
<name>SLAP2_CAEEL</name>
<proteinExistence type="inferred from homology"/>
<accession>Q02328</accession>
<accession>Q95PX2</accession>
<evidence type="ECO:0000255" key="1"/>
<evidence type="ECO:0000255" key="2">
    <source>
        <dbReference type="PROSITE-ProRule" id="PRU00243"/>
    </source>
</evidence>
<evidence type="ECO:0000255" key="3">
    <source>
        <dbReference type="PROSITE-ProRule" id="PRU00292"/>
    </source>
</evidence>
<evidence type="ECO:0000269" key="4">
    <source>
    </source>
</evidence>
<evidence type="ECO:0000305" key="5"/>
<comment type="function">
    <text evidence="4">Regulates pre-synaptic vesicle recycling at neuromuscular junctions of mechanosensory neurons. Plays a role in maintaining a normal defecation cycle.</text>
</comment>
<comment type="subcellular location">
    <subcellularLocation>
        <location evidence="5">Cytoplasm</location>
        <location evidence="5">Cytoskeleton</location>
    </subcellularLocation>
</comment>
<comment type="alternative products">
    <event type="alternative splicing"/>
    <isoform>
        <id>Q02328-1</id>
        <name>a</name>
        <sequence type="displayed"/>
    </isoform>
    <isoform>
        <id>Q02328-2</id>
        <name>b</name>
        <sequence type="described" ref="VSP_000494 VSP_000495"/>
    </isoform>
</comment>
<comment type="disruption phenotype">
    <text evidence="4">RNAi-mediated knockdown causes a reduction in progeny numbers and a lengthening of the defecation cycle. Touch responses are normal. Expression of poly-Q 128Q (128Q consists of the first 57 amino acids of human HTT with a 28 Gln residue expansion) in RNAi-mediated knockdown animals causes a more severe reduction in touch response compared to wild type expressing 128Q.</text>
</comment>
<comment type="similarity">
    <text evidence="5">Belongs to the SLA2 family.</text>
</comment>
<gene>
    <name type="primary">hipr-1</name>
    <name type="ORF">ZK370.3</name>
</gene>
<protein>
    <recommendedName>
        <fullName>Huntington interacting protein related 1</fullName>
    </recommendedName>
    <alternativeName>
        <fullName>Actin-binding protein SLA2 homolog</fullName>
    </alternativeName>
</protein>
<keyword id="KW-0009">Actin-binding</keyword>
<keyword id="KW-0025">Alternative splicing</keyword>
<keyword id="KW-0175">Coiled coil</keyword>
<keyword id="KW-0963">Cytoplasm</keyword>
<keyword id="KW-0206">Cytoskeleton</keyword>
<keyword id="KW-0254">Endocytosis</keyword>
<keyword id="KW-1185">Reference proteome</keyword>
<dbReference type="EMBL" id="FO080164">
    <property type="protein sequence ID" value="CCD61721.1"/>
    <property type="molecule type" value="Genomic_DNA"/>
</dbReference>
<dbReference type="EMBL" id="FO080164">
    <property type="protein sequence ID" value="CCD61722.1"/>
    <property type="molecule type" value="Genomic_DNA"/>
</dbReference>
<dbReference type="PIR" id="E88537">
    <property type="entry name" value="E88537"/>
</dbReference>
<dbReference type="RefSeq" id="NP_001379566.1">
    <molecule id="Q02328-2"/>
    <property type="nucleotide sequence ID" value="NM_001392161.1"/>
</dbReference>
<dbReference type="RefSeq" id="NP_498925.1">
    <property type="nucleotide sequence ID" value="NM_066524.3"/>
</dbReference>
<dbReference type="RefSeq" id="NP_741253.1">
    <molecule id="Q02328-1"/>
    <property type="nucleotide sequence ID" value="NM_171215.8"/>
</dbReference>
<dbReference type="SMR" id="Q02328"/>
<dbReference type="BioGRID" id="41427">
    <property type="interactions" value="18"/>
</dbReference>
<dbReference type="ELM" id="Q02328"/>
<dbReference type="FunCoup" id="Q02328">
    <property type="interactions" value="1839"/>
</dbReference>
<dbReference type="IntAct" id="Q02328">
    <property type="interactions" value="2"/>
</dbReference>
<dbReference type="STRING" id="6239.ZK370.3a.1"/>
<dbReference type="PaxDb" id="6239-ZK370.3a.1"/>
<dbReference type="PeptideAtlas" id="Q02328"/>
<dbReference type="EnsemblMetazoa" id="ZK370.3a.1">
    <molecule id="Q02328-1"/>
    <property type="protein sequence ID" value="ZK370.3a.1"/>
    <property type="gene ID" value="WBGene00022717"/>
</dbReference>
<dbReference type="EnsemblMetazoa" id="ZK370.3b.1">
    <molecule id="Q02328-2"/>
    <property type="protein sequence ID" value="ZK370.3b.1"/>
    <property type="gene ID" value="WBGene00022717"/>
</dbReference>
<dbReference type="EnsemblMetazoa" id="ZK370.3b.2">
    <molecule id="Q02328-2"/>
    <property type="protein sequence ID" value="ZK370.3b.2"/>
    <property type="gene ID" value="WBGene00022717"/>
</dbReference>
<dbReference type="GeneID" id="176224"/>
<dbReference type="KEGG" id="cel:CELE_ZK370.3"/>
<dbReference type="AGR" id="WB:WBGene00022717"/>
<dbReference type="CTD" id="176224"/>
<dbReference type="WormBase" id="ZK370.3a">
    <molecule id="Q02328-1"/>
    <property type="protein sequence ID" value="CE00540"/>
    <property type="gene ID" value="WBGene00022717"/>
    <property type="gene designation" value="hipr-1"/>
</dbReference>
<dbReference type="WormBase" id="ZK370.3b">
    <molecule id="Q02328-2"/>
    <property type="protein sequence ID" value="CE29640"/>
    <property type="gene ID" value="WBGene00022717"/>
    <property type="gene designation" value="hipr-1"/>
</dbReference>
<dbReference type="eggNOG" id="KOG0980">
    <property type="taxonomic scope" value="Eukaryota"/>
</dbReference>
<dbReference type="GeneTree" id="ENSGT00940000153594"/>
<dbReference type="InParanoid" id="Q02328"/>
<dbReference type="OMA" id="VCQLFQY"/>
<dbReference type="OrthoDB" id="8178130at2759"/>
<dbReference type="PhylomeDB" id="Q02328"/>
<dbReference type="Reactome" id="R-CEL-432722">
    <property type="pathway name" value="Golgi Associated Vesicle Biogenesis"/>
</dbReference>
<dbReference type="Reactome" id="R-CEL-8856828">
    <property type="pathway name" value="Clathrin-mediated endocytosis"/>
</dbReference>
<dbReference type="PRO" id="PR:Q02328"/>
<dbReference type="Proteomes" id="UP000001940">
    <property type="component" value="Chromosome III"/>
</dbReference>
<dbReference type="Bgee" id="WBGene00022717">
    <property type="expression patterns" value="Expressed in pharyngeal muscle cell (C elegans) and 4 other cell types or tissues"/>
</dbReference>
<dbReference type="GO" id="GO:0030136">
    <property type="term" value="C:clathrin-coated vesicle"/>
    <property type="evidence" value="ECO:0000318"/>
    <property type="project" value="GO_Central"/>
</dbReference>
<dbReference type="GO" id="GO:0030864">
    <property type="term" value="C:cortical actin cytoskeleton"/>
    <property type="evidence" value="ECO:0000318"/>
    <property type="project" value="GO_Central"/>
</dbReference>
<dbReference type="GO" id="GO:0098793">
    <property type="term" value="C:presynapse"/>
    <property type="evidence" value="ECO:0007669"/>
    <property type="project" value="GOC"/>
</dbReference>
<dbReference type="GO" id="GO:0051015">
    <property type="term" value="F:actin filament binding"/>
    <property type="evidence" value="ECO:0000318"/>
    <property type="project" value="GO_Central"/>
</dbReference>
<dbReference type="GO" id="GO:0035615">
    <property type="term" value="F:clathrin adaptor activity"/>
    <property type="evidence" value="ECO:0000318"/>
    <property type="project" value="GO_Central"/>
</dbReference>
<dbReference type="GO" id="GO:0032051">
    <property type="term" value="F:clathrin light chain binding"/>
    <property type="evidence" value="ECO:0000318"/>
    <property type="project" value="GO_Central"/>
</dbReference>
<dbReference type="GO" id="GO:0043325">
    <property type="term" value="F:phosphatidylinositol-3,4-bisphosphate binding"/>
    <property type="evidence" value="ECO:0000318"/>
    <property type="project" value="GO_Central"/>
</dbReference>
<dbReference type="GO" id="GO:0080025">
    <property type="term" value="F:phosphatidylinositol-3,5-bisphosphate binding"/>
    <property type="evidence" value="ECO:0000318"/>
    <property type="project" value="GO_Central"/>
</dbReference>
<dbReference type="GO" id="GO:0007015">
    <property type="term" value="P:actin filament organization"/>
    <property type="evidence" value="ECO:0000318"/>
    <property type="project" value="GO_Central"/>
</dbReference>
<dbReference type="GO" id="GO:0048268">
    <property type="term" value="P:clathrin coat assembly"/>
    <property type="evidence" value="ECO:0000318"/>
    <property type="project" value="GO_Central"/>
</dbReference>
<dbReference type="GO" id="GO:0030421">
    <property type="term" value="P:defecation"/>
    <property type="evidence" value="ECO:0000315"/>
    <property type="project" value="WormBase"/>
</dbReference>
<dbReference type="GO" id="GO:0032502">
    <property type="term" value="P:developmental process"/>
    <property type="evidence" value="ECO:0000315"/>
    <property type="project" value="WormBase"/>
</dbReference>
<dbReference type="GO" id="GO:0006897">
    <property type="term" value="P:endocytosis"/>
    <property type="evidence" value="ECO:0000318"/>
    <property type="project" value="GO_Central"/>
</dbReference>
<dbReference type="GO" id="GO:0007269">
    <property type="term" value="P:neurotransmitter secretion"/>
    <property type="evidence" value="ECO:0000315"/>
    <property type="project" value="WormBase"/>
</dbReference>
<dbReference type="GO" id="GO:0008104">
    <property type="term" value="P:protein localization"/>
    <property type="evidence" value="ECO:0000315"/>
    <property type="project" value="WormBase"/>
</dbReference>
<dbReference type="GO" id="GO:0007624">
    <property type="term" value="P:ultradian rhythm"/>
    <property type="evidence" value="ECO:0000315"/>
    <property type="project" value="WormBase"/>
</dbReference>
<dbReference type="CDD" id="cd17006">
    <property type="entry name" value="ANTH_N_HIP1_like"/>
    <property type="match status" value="1"/>
</dbReference>
<dbReference type="FunFam" id="1.20.1410.10:FF:000006">
    <property type="entry name" value="Huntingtin interacting protein"/>
    <property type="match status" value="1"/>
</dbReference>
<dbReference type="FunFam" id="1.20.5.1700:FF:000002">
    <property type="entry name" value="Huntingtin interacting protein 1"/>
    <property type="match status" value="1"/>
</dbReference>
<dbReference type="FunFam" id="1.25.40.90:FF:000012">
    <property type="entry name" value="Huntingtin interacting protein 1-related"/>
    <property type="match status" value="1"/>
</dbReference>
<dbReference type="Gene3D" id="1.20.5.1700">
    <property type="match status" value="1"/>
</dbReference>
<dbReference type="Gene3D" id="1.25.40.90">
    <property type="match status" value="1"/>
</dbReference>
<dbReference type="Gene3D" id="1.20.1410.10">
    <property type="entry name" value="I/LWEQ domain"/>
    <property type="match status" value="1"/>
</dbReference>
<dbReference type="InterPro" id="IPR011417">
    <property type="entry name" value="ANTH_dom"/>
</dbReference>
<dbReference type="InterPro" id="IPR013809">
    <property type="entry name" value="ENTH"/>
</dbReference>
<dbReference type="InterPro" id="IPR008942">
    <property type="entry name" value="ENTH_VHS"/>
</dbReference>
<dbReference type="InterPro" id="IPR035964">
    <property type="entry name" value="I/LWEQ_dom_sf"/>
</dbReference>
<dbReference type="InterPro" id="IPR002558">
    <property type="entry name" value="ILWEQ_dom"/>
</dbReference>
<dbReference type="InterPro" id="IPR030224">
    <property type="entry name" value="Sla2_fam"/>
</dbReference>
<dbReference type="PANTHER" id="PTHR10407">
    <property type="entry name" value="HUNTINGTIN INTERACTING PROTEIN 1"/>
    <property type="match status" value="1"/>
</dbReference>
<dbReference type="PANTHER" id="PTHR10407:SF15">
    <property type="entry name" value="HUNTINGTIN INTERACTING PROTEIN 1"/>
    <property type="match status" value="1"/>
</dbReference>
<dbReference type="Pfam" id="PF07651">
    <property type="entry name" value="ANTH"/>
    <property type="match status" value="1"/>
</dbReference>
<dbReference type="Pfam" id="PF01608">
    <property type="entry name" value="I_LWEQ"/>
    <property type="match status" value="1"/>
</dbReference>
<dbReference type="SMART" id="SM00273">
    <property type="entry name" value="ENTH"/>
    <property type="match status" value="1"/>
</dbReference>
<dbReference type="SMART" id="SM00307">
    <property type="entry name" value="ILWEQ"/>
    <property type="match status" value="1"/>
</dbReference>
<dbReference type="SUPFAM" id="SSF48464">
    <property type="entry name" value="ENTH/VHS domain"/>
    <property type="match status" value="1"/>
</dbReference>
<dbReference type="SUPFAM" id="SSF109885">
    <property type="entry name" value="I/LWEQ domain"/>
    <property type="match status" value="1"/>
</dbReference>
<dbReference type="PROSITE" id="PS50942">
    <property type="entry name" value="ENTH"/>
    <property type="match status" value="1"/>
</dbReference>
<dbReference type="PROSITE" id="PS50945">
    <property type="entry name" value="I_LWEQ"/>
    <property type="match status" value="1"/>
</dbReference>
<reference key="1">
    <citation type="journal article" date="1994" name="Nature">
        <title>2.2 Mb of contiguous nucleotide sequence from chromosome III of C. elegans.</title>
        <authorList>
            <person name="Wilson R."/>
            <person name="Ainscough R."/>
            <person name="Anderson K."/>
            <person name="Baynes C."/>
            <person name="Berks M."/>
            <person name="Bonfield J."/>
            <person name="Burton J."/>
            <person name="Connell M."/>
            <person name="Copsey T."/>
            <person name="Cooper J."/>
            <person name="Coulson A."/>
            <person name="Craxton M."/>
            <person name="Dear S."/>
            <person name="Du Z."/>
            <person name="Durbin R."/>
            <person name="Favello A."/>
            <person name="Fraser A."/>
            <person name="Fulton L."/>
            <person name="Gardner A."/>
            <person name="Green P."/>
            <person name="Hawkins T."/>
            <person name="Hillier L."/>
            <person name="Jier M."/>
            <person name="Johnston L."/>
            <person name="Jones M."/>
            <person name="Kershaw J."/>
            <person name="Kirsten J."/>
            <person name="Laisster N."/>
            <person name="Latreille P."/>
            <person name="Lightning J."/>
            <person name="Lloyd C."/>
            <person name="Mortimore B."/>
            <person name="O'Callaghan M."/>
            <person name="Parsons J."/>
            <person name="Percy C."/>
            <person name="Rifken L."/>
            <person name="Roopra A."/>
            <person name="Saunders D."/>
            <person name="Shownkeen R."/>
            <person name="Sims M."/>
            <person name="Smaldon N."/>
            <person name="Smith A."/>
            <person name="Smith M."/>
            <person name="Sonnhammer E."/>
            <person name="Staden R."/>
            <person name="Sulston J."/>
            <person name="Thierry-Mieg J."/>
            <person name="Thomas K."/>
            <person name="Vaudin M."/>
            <person name="Vaughan K."/>
            <person name="Waterston R."/>
            <person name="Watson A."/>
            <person name="Weinstock L."/>
            <person name="Wilkinson-Sproat J."/>
            <person name="Wohldman P."/>
        </authorList>
    </citation>
    <scope>NUCLEOTIDE SEQUENCE [LARGE SCALE GENOMIC DNA]</scope>
    <source>
        <strain>Bristol N2</strain>
    </source>
</reference>
<reference key="2">
    <citation type="journal article" date="1998" name="Science">
        <title>Genome sequence of the nematode C. elegans: a platform for investigating biology.</title>
        <authorList>
            <consortium name="The C. elegans sequencing consortium"/>
        </authorList>
    </citation>
    <scope>NUCLEOTIDE SEQUENCE [LARGE SCALE GENOMIC DNA]</scope>
    <scope>ALTERNATIVE SPLICING</scope>
    <source>
        <strain>Bristol N2</strain>
    </source>
</reference>
<reference key="3">
    <citation type="journal article" date="2007" name="J. Neurosci.">
        <title>Huntingtin-interacting protein 1 influences worm and mouse presynaptic function and protects Caenorhabditis elegans neurons against mutant polyglutamine toxicity.</title>
        <authorList>
            <person name="Parker J.A."/>
            <person name="Metzler M."/>
            <person name="Georgiou J."/>
            <person name="Mage M."/>
            <person name="Roder J.C."/>
            <person name="Rose A.M."/>
            <person name="Hayden M.R."/>
            <person name="Neri C."/>
        </authorList>
    </citation>
    <scope>FUNCTION</scope>
    <scope>DISRUPTION PHENOTYPE</scope>
</reference>
<feature type="chain" id="PRO_0000071949" description="Huntington interacting protein related 1">
    <location>
        <begin position="1"/>
        <end position="927"/>
    </location>
</feature>
<feature type="domain" description="ENTH" evidence="2">
    <location>
        <begin position="7"/>
        <end position="136"/>
    </location>
</feature>
<feature type="domain" description="I/LWEQ" evidence="3">
    <location>
        <begin position="673"/>
        <end position="914"/>
    </location>
</feature>
<feature type="coiled-coil region" evidence="1">
    <location>
        <begin position="336"/>
        <end position="524"/>
    </location>
</feature>
<feature type="splice variant" id="VSP_000494" description="In isoform b." evidence="5">
    <original>E</original>
    <variation>S</variation>
    <location>
        <position position="921"/>
    </location>
</feature>
<feature type="splice variant" id="VSP_000495" description="In isoform b." evidence="5">
    <location>
        <begin position="922"/>
        <end position="927"/>
    </location>
</feature>